<feature type="chain" id="PRO_0000083348" description="Protein IWS1 homolog">
    <location>
        <begin position="1"/>
        <end position="764"/>
    </location>
</feature>
<feature type="domain" description="TFIIS N-terminal" evidence="4">
    <location>
        <begin position="560"/>
        <end position="638"/>
    </location>
</feature>
<feature type="region of interest" description="Disordered" evidence="5">
    <location>
        <begin position="1"/>
        <end position="465"/>
    </location>
</feature>
<feature type="region of interest" description="Interaction with SUPT6H and ALYREF" evidence="1">
    <location>
        <begin position="469"/>
        <end position="764"/>
    </location>
</feature>
<feature type="region of interest" description="Disordered" evidence="5">
    <location>
        <begin position="642"/>
        <end position="676"/>
    </location>
</feature>
<feature type="short sequence motif" description="Integrase domain-binding motif (IBM)" evidence="3">
    <location>
        <begin position="415"/>
        <end position="441"/>
    </location>
</feature>
<feature type="compositionally biased region" description="Basic and acidic residues" evidence="5">
    <location>
        <begin position="44"/>
        <end position="67"/>
    </location>
</feature>
<feature type="compositionally biased region" description="Basic and acidic residues" evidence="5">
    <location>
        <begin position="85"/>
        <end position="102"/>
    </location>
</feature>
<feature type="compositionally biased region" description="Basic and acidic residues" evidence="5">
    <location>
        <begin position="119"/>
        <end position="144"/>
    </location>
</feature>
<feature type="compositionally biased region" description="Basic and acidic residues" evidence="5">
    <location>
        <begin position="176"/>
        <end position="197"/>
    </location>
</feature>
<feature type="compositionally biased region" description="Basic and acidic residues" evidence="5">
    <location>
        <begin position="267"/>
        <end position="320"/>
    </location>
</feature>
<feature type="compositionally biased region" description="Basic and acidic residues" evidence="5">
    <location>
        <begin position="370"/>
        <end position="381"/>
    </location>
</feature>
<feature type="compositionally biased region" description="Basic and acidic residues" evidence="5">
    <location>
        <begin position="391"/>
        <end position="405"/>
    </location>
</feature>
<feature type="compositionally biased region" description="Acidic residues" evidence="5">
    <location>
        <begin position="426"/>
        <end position="446"/>
    </location>
</feature>
<feature type="compositionally biased region" description="Basic and acidic residues" evidence="5">
    <location>
        <begin position="645"/>
        <end position="656"/>
    </location>
</feature>
<feature type="modified residue" description="N-acetylmethionine" evidence="3">
    <location>
        <position position="1"/>
    </location>
</feature>
<feature type="modified residue" description="Phosphoserine" evidence="7">
    <location>
        <position position="27"/>
    </location>
</feature>
<feature type="modified residue" description="Phosphoserine" evidence="3">
    <location>
        <position position="54"/>
    </location>
</feature>
<feature type="modified residue" description="Phosphoserine" evidence="3">
    <location>
        <position position="69"/>
    </location>
</feature>
<feature type="modified residue" description="Phosphoserine" evidence="3">
    <location>
        <position position="157"/>
    </location>
</feature>
<feature type="modified residue" description="Phosphoserine" evidence="3">
    <location>
        <position position="170"/>
    </location>
</feature>
<feature type="modified residue" description="Phosphoserine" evidence="3">
    <location>
        <position position="172"/>
    </location>
</feature>
<feature type="modified residue" description="Phosphoserine" evidence="7">
    <location>
        <position position="183"/>
    </location>
</feature>
<feature type="modified residue" description="Phosphoserine" evidence="3">
    <location>
        <position position="196"/>
    </location>
</feature>
<feature type="modified residue" description="Phosphoserine" evidence="3">
    <location>
        <position position="198"/>
    </location>
</feature>
<feature type="modified residue" description="Phosphoserine" evidence="3">
    <location>
        <position position="209"/>
    </location>
</feature>
<feature type="modified residue" description="Phosphoserine" evidence="3">
    <location>
        <position position="211"/>
    </location>
</feature>
<feature type="modified residue" description="Phosphoserine" evidence="3">
    <location>
        <position position="222"/>
    </location>
</feature>
<feature type="modified residue" description="Phosphoserine" evidence="3">
    <location>
        <position position="224"/>
    </location>
</feature>
<feature type="modified residue" description="Phosphoserine" evidence="3">
    <location>
        <position position="235"/>
    </location>
</feature>
<feature type="modified residue" description="Phosphoserine" evidence="3">
    <location>
        <position position="237"/>
    </location>
</feature>
<feature type="modified residue" description="Phosphoserine" evidence="3">
    <location>
        <position position="248"/>
    </location>
</feature>
<feature type="modified residue" description="Phosphoserine" evidence="3">
    <location>
        <position position="250"/>
    </location>
</feature>
<feature type="modified residue" description="Phosphoserine" evidence="3">
    <location>
        <position position="252"/>
    </location>
</feature>
<feature type="modified residue" description="Phosphoserine" evidence="7">
    <location>
        <position position="261"/>
    </location>
</feature>
<feature type="modified residue" description="Phosphoserine" evidence="7">
    <location>
        <position position="263"/>
    </location>
</feature>
<feature type="modified residue" description="Phosphoserine" evidence="3">
    <location>
        <position position="277"/>
    </location>
</feature>
<feature type="modified residue" description="Phosphoserine" evidence="3">
    <location>
        <position position="280"/>
    </location>
</feature>
<feature type="modified residue" description="Phosphoserine" evidence="7">
    <location>
        <position position="295"/>
    </location>
</feature>
<feature type="modified residue" description="Phosphoserine" evidence="2">
    <location>
        <position position="306"/>
    </location>
</feature>
<feature type="modified residue" description="Phosphoserine" evidence="7">
    <location>
        <position position="307"/>
    </location>
</feature>
<feature type="modified residue" description="Phosphoserine" evidence="7">
    <location>
        <position position="309"/>
    </location>
</feature>
<feature type="modified residue" description="Phosphoserine" evidence="7">
    <location>
        <position position="321"/>
    </location>
</feature>
<feature type="modified residue" description="Phosphoserine" evidence="7">
    <location>
        <position position="342"/>
    </location>
</feature>
<feature type="modified residue" description="Phosphoserine" evidence="7">
    <location>
        <position position="344"/>
    </location>
</feature>
<feature type="modified residue" description="Phosphoserine" evidence="7">
    <location>
        <position position="360"/>
    </location>
</feature>
<feature type="modified residue" description="Phosphoserine" evidence="7">
    <location>
        <position position="365"/>
    </location>
</feature>
<feature type="modified residue" description="Phosphoserine" evidence="7">
    <location>
        <position position="367"/>
    </location>
</feature>
<feature type="modified residue" description="Phosphoserine" evidence="7">
    <location>
        <position position="371"/>
    </location>
</feature>
<feature type="modified residue" description="Phosphothreonine" evidence="3">
    <location>
        <position position="380"/>
    </location>
</feature>
<feature type="modified residue" description="Phosphoserine" evidence="7">
    <location>
        <position position="383"/>
    </location>
</feature>
<feature type="modified residue" description="Phosphoserine" evidence="7">
    <location>
        <position position="385"/>
    </location>
</feature>
<feature type="modified residue" description="Phosphoserine" evidence="3">
    <location>
        <position position="407"/>
    </location>
</feature>
<feature type="modified residue" description="Phosphoserine" evidence="3">
    <location>
        <position position="409"/>
    </location>
</feature>
<feature type="modified residue" description="Phosphoserine" evidence="3">
    <location>
        <position position="411"/>
    </location>
</feature>
<feature type="modified residue" description="Phosphoserine" evidence="3">
    <location>
        <position position="426"/>
    </location>
</feature>
<feature type="modified residue" description="Phosphothreonine" evidence="3">
    <location>
        <position position="435"/>
    </location>
</feature>
<feature type="modified residue" description="Phosphoserine" evidence="7">
    <location>
        <position position="457"/>
    </location>
</feature>
<feature type="modified residue" description="Phosphoserine" evidence="7">
    <location>
        <position position="459"/>
    </location>
</feature>
<feature type="modified residue" description="Phosphothreonine" evidence="3">
    <location>
        <position position="671"/>
    </location>
</feature>
<gene>
    <name type="primary">Iws1</name>
    <name type="synonym">Iws1l</name>
</gene>
<reference key="1">
    <citation type="journal article" date="2004" name="Genome Res.">
        <title>The status, quality, and expansion of the NIH full-length cDNA project: the Mammalian Gene Collection (MGC).</title>
        <authorList>
            <consortium name="The MGC Project Team"/>
        </authorList>
    </citation>
    <scope>NUCLEOTIDE SEQUENCE [LARGE SCALE MRNA]</scope>
    <source>
        <tissue>Heart</tissue>
    </source>
</reference>
<reference key="2">
    <citation type="journal article" date="2012" name="Nat. Commun.">
        <title>Quantitative maps of protein phosphorylation sites across 14 different rat organs and tissues.</title>
        <authorList>
            <person name="Lundby A."/>
            <person name="Secher A."/>
            <person name="Lage K."/>
            <person name="Nordsborg N.B."/>
            <person name="Dmytriyev A."/>
            <person name="Lundby C."/>
            <person name="Olsen J.V."/>
        </authorList>
    </citation>
    <scope>PHOSPHORYLATION [LARGE SCALE ANALYSIS] AT SER-27; SER-183; SER-261; SER-263; SER-295; SER-307; SER-309; SER-321; SER-342; SER-344; SER-360; SER-365; SER-367; SER-371; SER-383; SER-385; SER-457 AND SER-459</scope>
    <scope>IDENTIFICATION BY MASS SPECTROMETRY [LARGE SCALE ANALYSIS]</scope>
</reference>
<sequence>MDSEYYSGDQSDDGGATPVQDERDSGSDGEDDVNEQHSGSDTGSVDRHSENETSDREDGLTKIHNGTDSENDEPSNVHASDSESEELHRPKDSDSESEEHAESPASDSENEAVHQQGSDSEKEELLNGHASDSEKEEGRKHAASDSETEDTLQPQGSESDSEDPPRPQASDSESEEPPKPRISDSESEELPKPRISDSESEDPPRPQVSDSESEELPKPRVSDSESEDPPRPQASDSESEELPKPRVSDSESEDPQKGPASDSEAEDASRHKEKPESEDSDGENKREDSEVQNESDGHADRKGLHSSDSEEEEPKRQKIDSDDDGEKEGDEKVAKRKAAVLSDSEDEDKASAAKKSRVISDADDSDSDVVSDKSGKREKTVASDSEEEVGKEESSVKKSEEKDLFGSDSESGNEEENLIADIFGESGDEEEEEFTGFNQEDLEEEKNETQLKEAEDSDSDDNIKRGKHMDFLSDFEMMLQRKKSMCGKRRRNRDGGTFISDADDVVSAMIVKMNEAAEEDRQLNNQKKPALKKLTLLPTVVMHLKKQDLKETFIDSGVMSAIKEWLSPLPDRSLPALKIREELLKILQELPSVSQETLKHSGIGRAVMYLYKHPKESRSNKDMAGKLINEWSRPIFGLTSNYKGMTREEREQRDLEQMPQRRRMSSTGGQTPRRDLEKVLTGEEKALRPGDPGFCARARVPMPSNKDYVVRPKWNVEMESSRPGILKKGLSRLEKHKRRFAEQKRLSQMHRAVKFSIEGNRMPL</sequence>
<keyword id="KW-0007">Acetylation</keyword>
<keyword id="KW-0507">mRNA processing</keyword>
<keyword id="KW-0508">mRNA splicing</keyword>
<keyword id="KW-0509">mRNA transport</keyword>
<keyword id="KW-0539">Nucleus</keyword>
<keyword id="KW-0597">Phosphoprotein</keyword>
<keyword id="KW-1185">Reference proteome</keyword>
<keyword id="KW-0804">Transcription</keyword>
<keyword id="KW-0805">Transcription regulation</keyword>
<keyword id="KW-0813">Transport</keyword>
<accession>Q3SWT4</accession>
<proteinExistence type="evidence at protein level"/>
<organism>
    <name type="scientific">Rattus norvegicus</name>
    <name type="common">Rat</name>
    <dbReference type="NCBI Taxonomy" id="10116"/>
    <lineage>
        <taxon>Eukaryota</taxon>
        <taxon>Metazoa</taxon>
        <taxon>Chordata</taxon>
        <taxon>Craniata</taxon>
        <taxon>Vertebrata</taxon>
        <taxon>Euteleostomi</taxon>
        <taxon>Mammalia</taxon>
        <taxon>Eutheria</taxon>
        <taxon>Euarchontoglires</taxon>
        <taxon>Glires</taxon>
        <taxon>Rodentia</taxon>
        <taxon>Myomorpha</taxon>
        <taxon>Muroidea</taxon>
        <taxon>Muridae</taxon>
        <taxon>Murinae</taxon>
        <taxon>Rattus</taxon>
    </lineage>
</organism>
<name>IWS1_RAT</name>
<dbReference type="EMBL" id="BC104700">
    <property type="protein sequence ID" value="AAI04701.1"/>
    <property type="molecule type" value="mRNA"/>
</dbReference>
<dbReference type="RefSeq" id="NP_001030090.1">
    <property type="nucleotide sequence ID" value="NM_001034918.2"/>
</dbReference>
<dbReference type="RefSeq" id="XP_006254634.1">
    <property type="nucleotide sequence ID" value="XM_006254572.5"/>
</dbReference>
<dbReference type="SMR" id="Q3SWT4"/>
<dbReference type="FunCoup" id="Q3SWT4">
    <property type="interactions" value="2480"/>
</dbReference>
<dbReference type="STRING" id="10116.ENSRNOP00000069847"/>
<dbReference type="iPTMnet" id="Q3SWT4"/>
<dbReference type="PhosphoSitePlus" id="Q3SWT4"/>
<dbReference type="PaxDb" id="10116-ENSRNOP00000057730"/>
<dbReference type="Ensembl" id="ENSRNOT00000061011.4">
    <property type="protein sequence ID" value="ENSRNOP00000057730.2"/>
    <property type="gene ID" value="ENSRNOG00000014630.8"/>
</dbReference>
<dbReference type="GeneID" id="291705"/>
<dbReference type="KEGG" id="rno:291705"/>
<dbReference type="UCSC" id="RGD:1304762">
    <property type="organism name" value="rat"/>
</dbReference>
<dbReference type="AGR" id="RGD:1304762"/>
<dbReference type="CTD" id="55677"/>
<dbReference type="RGD" id="1304762">
    <property type="gene designation" value="Iws1"/>
</dbReference>
<dbReference type="eggNOG" id="KOG1793">
    <property type="taxonomic scope" value="Eukaryota"/>
</dbReference>
<dbReference type="GeneTree" id="ENSGT00720000108834"/>
<dbReference type="InParanoid" id="Q3SWT4"/>
<dbReference type="OrthoDB" id="21124at2759"/>
<dbReference type="Reactome" id="R-RNO-112382">
    <property type="pathway name" value="Formation of RNA Pol II elongation complex"/>
</dbReference>
<dbReference type="Reactome" id="R-RNO-674695">
    <property type="pathway name" value="RNA Polymerase II Pre-transcription Events"/>
</dbReference>
<dbReference type="Reactome" id="R-RNO-75955">
    <property type="pathway name" value="RNA Polymerase II Transcription Elongation"/>
</dbReference>
<dbReference type="PRO" id="PR:Q3SWT4"/>
<dbReference type="Proteomes" id="UP000002494">
    <property type="component" value="Chromosome 18"/>
</dbReference>
<dbReference type="Bgee" id="ENSRNOG00000014630">
    <property type="expression patterns" value="Expressed in skeletal muscle tissue and 19 other cell types or tissues"/>
</dbReference>
<dbReference type="ExpressionAtlas" id="Q3SWT4">
    <property type="expression patterns" value="baseline and differential"/>
</dbReference>
<dbReference type="GO" id="GO:0005634">
    <property type="term" value="C:nucleus"/>
    <property type="evidence" value="ECO:0000250"/>
    <property type="project" value="UniProtKB"/>
</dbReference>
<dbReference type="GO" id="GO:0006338">
    <property type="term" value="P:chromatin remodeling"/>
    <property type="evidence" value="ECO:0000250"/>
    <property type="project" value="UniProtKB"/>
</dbReference>
<dbReference type="GO" id="GO:0006397">
    <property type="term" value="P:mRNA processing"/>
    <property type="evidence" value="ECO:0007669"/>
    <property type="project" value="UniProtKB-KW"/>
</dbReference>
<dbReference type="GO" id="GO:0016973">
    <property type="term" value="P:poly(A)+ mRNA export from nucleus"/>
    <property type="evidence" value="ECO:0000318"/>
    <property type="project" value="GO_Central"/>
</dbReference>
<dbReference type="GO" id="GO:0010793">
    <property type="term" value="P:regulation of mRNA export from nucleus"/>
    <property type="evidence" value="ECO:0000250"/>
    <property type="project" value="UniProtKB"/>
</dbReference>
<dbReference type="GO" id="GO:0050684">
    <property type="term" value="P:regulation of mRNA processing"/>
    <property type="evidence" value="ECO:0000250"/>
    <property type="project" value="UniProtKB"/>
</dbReference>
<dbReference type="GO" id="GO:0008380">
    <property type="term" value="P:RNA splicing"/>
    <property type="evidence" value="ECO:0007669"/>
    <property type="project" value="UniProtKB-KW"/>
</dbReference>
<dbReference type="GO" id="GO:0140673">
    <property type="term" value="P:transcription elongation-coupled chromatin remodeling"/>
    <property type="evidence" value="ECO:0000266"/>
    <property type="project" value="RGD"/>
</dbReference>
<dbReference type="FunFam" id="1.20.930.10:FF:000001">
    <property type="entry name" value="IWS1, SUPT6H interacting protein"/>
    <property type="match status" value="1"/>
</dbReference>
<dbReference type="Gene3D" id="1.20.930.10">
    <property type="entry name" value="Conserved domain common to transcription factors TFIIS, elongin A, CRSP70"/>
    <property type="match status" value="1"/>
</dbReference>
<dbReference type="InterPro" id="IPR051037">
    <property type="entry name" value="RNAPII_TF_IWS1"/>
</dbReference>
<dbReference type="InterPro" id="IPR035441">
    <property type="entry name" value="TFIIS/LEDGF_dom_sf"/>
</dbReference>
<dbReference type="InterPro" id="IPR017923">
    <property type="entry name" value="TFIIS_N"/>
</dbReference>
<dbReference type="PANTHER" id="PTHR46010">
    <property type="entry name" value="PROTEIN IWS1 HOMOLOG"/>
    <property type="match status" value="1"/>
</dbReference>
<dbReference type="PANTHER" id="PTHR46010:SF1">
    <property type="entry name" value="PROTEIN IWS1 HOMOLOG"/>
    <property type="match status" value="1"/>
</dbReference>
<dbReference type="Pfam" id="PF08711">
    <property type="entry name" value="Med26"/>
    <property type="match status" value="1"/>
</dbReference>
<dbReference type="SUPFAM" id="SSF47676">
    <property type="entry name" value="Conserved domain common to transcription factors TFIIS, elongin A, CRSP70"/>
    <property type="match status" value="1"/>
</dbReference>
<dbReference type="PROSITE" id="PS51319">
    <property type="entry name" value="TFIIS_N"/>
    <property type="match status" value="1"/>
</dbReference>
<comment type="function">
    <text evidence="1">Transcription factor which plays a key role in defining the composition of the RNA polymerase II (RNAPII) elongation complex and in modulating the production of mature mRNA transcripts. Acts as an assembly factor to recruit various factors to the RNAPII elongation complex and is recruited to the complex via binding to the transcription elongation factor SUPT6H bound to the C-terminal domain (CTD) of the RNAPII subunit RPB1 (POLR2A). The SUPT6H:IWS1:CTD complex recruits mRNA export factors (ALYREF/THOC4, EXOSC10) as well as histone modifying enzymes (such as SETD2) to ensure proper mRNA splicing, efficient mRNA export and elongation-coupled H3K36 methylation, a signature chromatin mark of active transcription (By similarity).</text>
</comment>
<comment type="subunit">
    <text evidence="3">Interacts with SUPT6H; binds preferentially to the POLR2A-bound SUPT6H. Interacts with ALYREF/THOC4, SETD2 and PRMT5 (By similarity). Interacts with HDGFRP2 (By similarity). Interacts (via IBM motif) with PSIP1 (via IBD domain); phosphorylation increases its affinity for PSIP1 (By similarity).</text>
</comment>
<comment type="subcellular location">
    <subcellularLocation>
        <location evidence="4">Nucleus</location>
    </subcellularLocation>
</comment>
<comment type="PTM">
    <text evidence="3">Phosphorylation increases its interaction with PSIP1.</text>
</comment>
<comment type="similarity">
    <text evidence="6">Belongs to the IWS1 family.</text>
</comment>
<protein>
    <recommendedName>
        <fullName>Protein IWS1 homolog</fullName>
    </recommendedName>
    <alternativeName>
        <fullName>IWS1-like protein</fullName>
    </alternativeName>
</protein>
<evidence type="ECO:0000250" key="1"/>
<evidence type="ECO:0000250" key="2">
    <source>
        <dbReference type="UniProtKB" id="Q8C1D8"/>
    </source>
</evidence>
<evidence type="ECO:0000250" key="3">
    <source>
        <dbReference type="UniProtKB" id="Q96ST2"/>
    </source>
</evidence>
<evidence type="ECO:0000255" key="4">
    <source>
        <dbReference type="PROSITE-ProRule" id="PRU00649"/>
    </source>
</evidence>
<evidence type="ECO:0000256" key="5">
    <source>
        <dbReference type="SAM" id="MobiDB-lite"/>
    </source>
</evidence>
<evidence type="ECO:0000305" key="6"/>
<evidence type="ECO:0007744" key="7">
    <source>
    </source>
</evidence>